<accession>B5ZMI7</accession>
<proteinExistence type="inferred from homology"/>
<gene>
    <name type="ordered locus">Rleg2_1518</name>
</gene>
<reference key="1">
    <citation type="journal article" date="2010" name="Stand. Genomic Sci.">
        <title>Complete genome sequence of Rhizobium leguminosarum bv trifolii strain WSM2304, an effective microsymbiont of the South American clover Trifolium polymorphum.</title>
        <authorList>
            <person name="Reeve W."/>
            <person name="O'Hara G."/>
            <person name="Chain P."/>
            <person name="Ardley J."/>
            <person name="Brau L."/>
            <person name="Nandesena K."/>
            <person name="Tiwari R."/>
            <person name="Malfatti S."/>
            <person name="Kiss H."/>
            <person name="Lapidus A."/>
            <person name="Copeland A."/>
            <person name="Nolan M."/>
            <person name="Land M."/>
            <person name="Ivanova N."/>
            <person name="Mavromatis K."/>
            <person name="Markowitz V."/>
            <person name="Kyrpides N."/>
            <person name="Melino V."/>
            <person name="Denton M."/>
            <person name="Yates R."/>
            <person name="Howieson J."/>
        </authorList>
    </citation>
    <scope>NUCLEOTIDE SEQUENCE [LARGE SCALE GENOMIC DNA]</scope>
    <source>
        <strain>WSM2304</strain>
    </source>
</reference>
<sequence length="163" mass="17853">MTVLTIEEMAETLAPRQAIAGLDLGTKTIGLSMSDLGRRFATPRPVIRRVKFTIDAQALMDFATAEKVAGFVIGLPMNMDGSAGPRVQATRAFVRNMEQKTALPFVYWDERLSTVAAERTLLEMDVSRAKRAERIDSAAASFILQGALDRLSLLARSDGDEFS</sequence>
<keyword id="KW-0963">Cytoplasm</keyword>
<keyword id="KW-0378">Hydrolase</keyword>
<keyword id="KW-0540">Nuclease</keyword>
<keyword id="KW-1185">Reference proteome</keyword>
<keyword id="KW-0690">Ribosome biogenesis</keyword>
<organism>
    <name type="scientific">Rhizobium leguminosarum bv. trifolii (strain WSM2304)</name>
    <dbReference type="NCBI Taxonomy" id="395492"/>
    <lineage>
        <taxon>Bacteria</taxon>
        <taxon>Pseudomonadati</taxon>
        <taxon>Pseudomonadota</taxon>
        <taxon>Alphaproteobacteria</taxon>
        <taxon>Hyphomicrobiales</taxon>
        <taxon>Rhizobiaceae</taxon>
        <taxon>Rhizobium/Agrobacterium group</taxon>
        <taxon>Rhizobium</taxon>
    </lineage>
</organism>
<protein>
    <recommendedName>
        <fullName evidence="1">Putative pre-16S rRNA nuclease</fullName>
        <ecNumber evidence="1">3.1.-.-</ecNumber>
    </recommendedName>
</protein>
<evidence type="ECO:0000255" key="1">
    <source>
        <dbReference type="HAMAP-Rule" id="MF_00651"/>
    </source>
</evidence>
<feature type="chain" id="PRO_1000131062" description="Putative pre-16S rRNA nuclease">
    <location>
        <begin position="1"/>
        <end position="163"/>
    </location>
</feature>
<comment type="function">
    <text evidence="1">Could be a nuclease involved in processing of the 5'-end of pre-16S rRNA.</text>
</comment>
<comment type="subcellular location">
    <subcellularLocation>
        <location evidence="1">Cytoplasm</location>
    </subcellularLocation>
</comment>
<comment type="similarity">
    <text evidence="1">Belongs to the YqgF nuclease family.</text>
</comment>
<name>YQGF_RHILW</name>
<dbReference type="EC" id="3.1.-.-" evidence="1"/>
<dbReference type="EMBL" id="CP001191">
    <property type="protein sequence ID" value="ACI54809.1"/>
    <property type="molecule type" value="Genomic_DNA"/>
</dbReference>
<dbReference type="RefSeq" id="WP_012557506.1">
    <property type="nucleotide sequence ID" value="NC_011369.1"/>
</dbReference>
<dbReference type="SMR" id="B5ZMI7"/>
<dbReference type="STRING" id="395492.Rleg2_1518"/>
<dbReference type="KEGG" id="rlt:Rleg2_1518"/>
<dbReference type="eggNOG" id="COG0816">
    <property type="taxonomic scope" value="Bacteria"/>
</dbReference>
<dbReference type="HOGENOM" id="CLU_098240_1_1_5"/>
<dbReference type="Proteomes" id="UP000008330">
    <property type="component" value="Chromosome"/>
</dbReference>
<dbReference type="GO" id="GO:0005829">
    <property type="term" value="C:cytosol"/>
    <property type="evidence" value="ECO:0007669"/>
    <property type="project" value="TreeGrafter"/>
</dbReference>
<dbReference type="GO" id="GO:0004518">
    <property type="term" value="F:nuclease activity"/>
    <property type="evidence" value="ECO:0007669"/>
    <property type="project" value="UniProtKB-KW"/>
</dbReference>
<dbReference type="GO" id="GO:0000967">
    <property type="term" value="P:rRNA 5'-end processing"/>
    <property type="evidence" value="ECO:0007669"/>
    <property type="project" value="UniProtKB-UniRule"/>
</dbReference>
<dbReference type="CDD" id="cd16964">
    <property type="entry name" value="YqgF"/>
    <property type="match status" value="1"/>
</dbReference>
<dbReference type="Gene3D" id="3.30.420.140">
    <property type="entry name" value="YqgF/RNase H-like domain"/>
    <property type="match status" value="1"/>
</dbReference>
<dbReference type="HAMAP" id="MF_00651">
    <property type="entry name" value="Nuclease_YqgF"/>
    <property type="match status" value="1"/>
</dbReference>
<dbReference type="InterPro" id="IPR012337">
    <property type="entry name" value="RNaseH-like_sf"/>
</dbReference>
<dbReference type="InterPro" id="IPR005227">
    <property type="entry name" value="YqgF"/>
</dbReference>
<dbReference type="InterPro" id="IPR006641">
    <property type="entry name" value="YqgF/RNaseH-like_dom"/>
</dbReference>
<dbReference type="InterPro" id="IPR037027">
    <property type="entry name" value="YqgF/RNaseH-like_dom_sf"/>
</dbReference>
<dbReference type="NCBIfam" id="TIGR00250">
    <property type="entry name" value="RNAse_H_YqgF"/>
    <property type="match status" value="1"/>
</dbReference>
<dbReference type="PANTHER" id="PTHR33317">
    <property type="entry name" value="POLYNUCLEOTIDYL TRANSFERASE, RIBONUCLEASE H-LIKE SUPERFAMILY PROTEIN"/>
    <property type="match status" value="1"/>
</dbReference>
<dbReference type="PANTHER" id="PTHR33317:SF4">
    <property type="entry name" value="POLYNUCLEOTIDYL TRANSFERASE, RIBONUCLEASE H-LIKE SUPERFAMILY PROTEIN"/>
    <property type="match status" value="1"/>
</dbReference>
<dbReference type="Pfam" id="PF03652">
    <property type="entry name" value="RuvX"/>
    <property type="match status" value="1"/>
</dbReference>
<dbReference type="SMART" id="SM00732">
    <property type="entry name" value="YqgFc"/>
    <property type="match status" value="1"/>
</dbReference>
<dbReference type="SUPFAM" id="SSF53098">
    <property type="entry name" value="Ribonuclease H-like"/>
    <property type="match status" value="1"/>
</dbReference>